<organism>
    <name type="scientific">Cyprinus carpio</name>
    <name type="common">Common carp</name>
    <dbReference type="NCBI Taxonomy" id="7962"/>
    <lineage>
        <taxon>Eukaryota</taxon>
        <taxon>Metazoa</taxon>
        <taxon>Chordata</taxon>
        <taxon>Craniata</taxon>
        <taxon>Vertebrata</taxon>
        <taxon>Euteleostomi</taxon>
        <taxon>Actinopterygii</taxon>
        <taxon>Neopterygii</taxon>
        <taxon>Teleostei</taxon>
        <taxon>Ostariophysi</taxon>
        <taxon>Cypriniformes</taxon>
        <taxon>Cyprinidae</taxon>
        <taxon>Cyprininae</taxon>
        <taxon>Cyprinus</taxon>
    </lineage>
</organism>
<proteinExistence type="evidence at transcript level"/>
<dbReference type="EMBL" id="U81505">
    <property type="protein sequence ID" value="AAB39938.1"/>
    <property type="molecule type" value="mRNA"/>
</dbReference>
<dbReference type="SMR" id="P79702"/>
<dbReference type="Proteomes" id="UP000694384">
    <property type="component" value="Unplaced"/>
</dbReference>
<dbReference type="Proteomes" id="UP000694427">
    <property type="component" value="Unplaced"/>
</dbReference>
<dbReference type="Proteomes" id="UP000694700">
    <property type="component" value="Unplaced"/>
</dbReference>
<dbReference type="Proteomes" id="UP000694701">
    <property type="component" value="Unplaced"/>
</dbReference>
<dbReference type="Proteomes" id="UP001155660">
    <property type="component" value="Unplaced"/>
</dbReference>
<dbReference type="GO" id="GO:0005634">
    <property type="term" value="C:nucleus"/>
    <property type="evidence" value="ECO:0007669"/>
    <property type="project" value="UniProtKB-SubCell"/>
</dbReference>
<dbReference type="GO" id="GO:0000981">
    <property type="term" value="F:DNA-binding transcription factor activity, RNA polymerase II-specific"/>
    <property type="evidence" value="ECO:0007669"/>
    <property type="project" value="TreeGrafter"/>
</dbReference>
<dbReference type="GO" id="GO:0000978">
    <property type="term" value="F:RNA polymerase II cis-regulatory region sequence-specific DNA binding"/>
    <property type="evidence" value="ECO:0007669"/>
    <property type="project" value="TreeGrafter"/>
</dbReference>
<dbReference type="CDD" id="cd14721">
    <property type="entry name" value="bZIP_Fos"/>
    <property type="match status" value="1"/>
</dbReference>
<dbReference type="FunFam" id="1.20.5.170:FF:000006">
    <property type="entry name" value="fos-related antigen 2 isoform X1"/>
    <property type="match status" value="1"/>
</dbReference>
<dbReference type="Gene3D" id="1.20.5.170">
    <property type="match status" value="1"/>
</dbReference>
<dbReference type="InterPro" id="IPR000837">
    <property type="entry name" value="AP-1"/>
</dbReference>
<dbReference type="InterPro" id="IPR004827">
    <property type="entry name" value="bZIP"/>
</dbReference>
<dbReference type="InterPro" id="IPR046347">
    <property type="entry name" value="bZIP_sf"/>
</dbReference>
<dbReference type="PANTHER" id="PTHR23351">
    <property type="entry name" value="FOS TRANSCRIPTION FACTOR-RELATED"/>
    <property type="match status" value="1"/>
</dbReference>
<dbReference type="PANTHER" id="PTHR23351:SF4">
    <property type="entry name" value="PROTEIN C-FOS"/>
    <property type="match status" value="1"/>
</dbReference>
<dbReference type="Pfam" id="PF00170">
    <property type="entry name" value="bZIP_1"/>
    <property type="match status" value="1"/>
</dbReference>
<dbReference type="PRINTS" id="PR00042">
    <property type="entry name" value="LEUZIPPRFOS"/>
</dbReference>
<dbReference type="SMART" id="SM00338">
    <property type="entry name" value="BRLZ"/>
    <property type="match status" value="1"/>
</dbReference>
<dbReference type="SUPFAM" id="SSF57959">
    <property type="entry name" value="Leucine zipper domain"/>
    <property type="match status" value="1"/>
</dbReference>
<dbReference type="PROSITE" id="PS50217">
    <property type="entry name" value="BZIP"/>
    <property type="match status" value="1"/>
</dbReference>
<dbReference type="PROSITE" id="PS00036">
    <property type="entry name" value="BZIP_BASIC"/>
    <property type="match status" value="1"/>
</dbReference>
<accession>P79702</accession>
<evidence type="ECO:0000250" key="1"/>
<evidence type="ECO:0000255" key="2">
    <source>
        <dbReference type="PROSITE-ProRule" id="PRU00978"/>
    </source>
</evidence>
<evidence type="ECO:0000256" key="3">
    <source>
        <dbReference type="SAM" id="MobiDB-lite"/>
    </source>
</evidence>
<evidence type="ECO:0000305" key="4"/>
<reference key="1">
    <citation type="submission" date="1997-02" db="EMBL/GenBank/DDBJ databases">
        <title>The cloning and sequence of carp c-fos cDNA.</title>
        <authorList>
            <person name="Chang M.S."/>
            <person name="Huang C.J."/>
        </authorList>
    </citation>
    <scope>NUCLEOTIDE SEQUENCE [MRNA]</scope>
</reference>
<keyword id="KW-0238">DNA-binding</keyword>
<keyword id="KW-0539">Nucleus</keyword>
<keyword id="KW-0597">Phosphoprotein</keyword>
<keyword id="KW-0656">Proto-oncogene</keyword>
<keyword id="KW-1185">Reference proteome</keyword>
<sequence length="347" mass="37587">MMFTSLNADCDASSRCSTASAAAESVACYPLNQTQKFTELSVSSASFVPTVTAISSCPDLQWMVQPMVSSVAPSNGGARSYNPNPYPKMRVTGTKSPNSNKRARAEQLSPEEEEKKRVRRERNKMAAAKCRNRRRELTDTLQAETDELEDEKSALQNDIANLLKEKERLEFILAAHKPICKIPSSSVSPIPAASVPEIHSITTSVVSTANAPVTTSSSSSLFSSTASTDSFGSTVEISDLEPTLEESLELLAKAELETARSVPDVDLSSSLYARDWESLYTPANNDLEPLCTPVVTRTPACTTYTSSFTFTYPENDVFPSCGPVHRRGSSSNDQSSDSLNSPTLLTL</sequence>
<protein>
    <recommendedName>
        <fullName evidence="4">Protein c-Fos</fullName>
    </recommendedName>
    <alternativeName>
        <fullName>Cellular oncogene fos</fullName>
    </alternativeName>
    <alternativeName>
        <fullName evidence="4">Transcription factor AP-1 subunit c-Fos</fullName>
    </alternativeName>
</protein>
<comment type="function">
    <text evidence="1">Nuclear phosphoprotein which forms a tight but non-covalently linked complex with the JUN/AP-1 transcription factor. FOS has a critical function in regulating the development of cells destined to form and maintain the skeleton. It is thought to have an important role in signal transduction, cell proliferation and differentiation (By similarity).</text>
</comment>
<comment type="subunit">
    <text evidence="1">Heterodimer.</text>
</comment>
<comment type="subcellular location">
    <subcellularLocation>
        <location>Nucleus</location>
    </subcellularLocation>
</comment>
<comment type="similarity">
    <text evidence="4">Belongs to the bZIP family. Fos subfamily.</text>
</comment>
<feature type="chain" id="PRO_0000076472" description="Protein c-Fos">
    <location>
        <begin position="1"/>
        <end position="347"/>
    </location>
</feature>
<feature type="domain" description="bZIP" evidence="2">
    <location>
        <begin position="113"/>
        <end position="176"/>
    </location>
</feature>
<feature type="region of interest" description="Disordered" evidence="3">
    <location>
        <begin position="72"/>
        <end position="125"/>
    </location>
</feature>
<feature type="region of interest" description="Basic motif" evidence="2">
    <location>
        <begin position="115"/>
        <end position="135"/>
    </location>
</feature>
<feature type="region of interest" description="Leucine-zipper" evidence="2">
    <location>
        <begin position="141"/>
        <end position="169"/>
    </location>
</feature>
<feature type="region of interest" description="Disordered" evidence="3">
    <location>
        <begin position="323"/>
        <end position="347"/>
    </location>
</feature>
<feature type="compositionally biased region" description="Low complexity" evidence="3">
    <location>
        <begin position="329"/>
        <end position="341"/>
    </location>
</feature>
<name>FOS_CYPCA</name>
<gene>
    <name type="primary">fos</name>
</gene>